<evidence type="ECO:0000255" key="1">
    <source>
        <dbReference type="HAMAP-Rule" id="MF_00253"/>
    </source>
</evidence>
<sequence length="463" mass="53620">MAKDMDTIVSLAKHRGFVFPGSDIYGGLSNTWDYGPLGVELKNNVKKAWWQKFITQSPFNVGIDAAILMNPKVWEASGHLNNFNDPMIDNKDSKIRYRADKLIEDYMQDVKGDENFIADGLSFEQMKKIIDDEGIVCPVSKTANWTEIRQFNLMFKTFQGVTEDSTNEIFLRPETAQGIFVNYKNVQRSMRKKLPFGIGQIGKSFRNEITPGNFIFRTREFEQMELEFFCKPGEEIEWQNYWKTFASDWLTSLNMSSENMRLRDHDEDELSHYSNATTDIEYKFPFGWGELWGIASRTDFDLRKHAEHSGEDFRYHDPETNEKYIPYCIEPSLGADRVTLAFLCDAYDEEGVEGSKDARTVLHFHPALAPYKAAILPLSKKLSGEAIKIFEQLSSKFSIDFDESQSIGKRYRRQDEIGTPYCVTFDFDSLEDNQVTVRDRDSMEQVRMPISELEAFLTEKTKF</sequence>
<organism>
    <name type="scientific">Staphylococcus aureus (strain MRSA252)</name>
    <dbReference type="NCBI Taxonomy" id="282458"/>
    <lineage>
        <taxon>Bacteria</taxon>
        <taxon>Bacillati</taxon>
        <taxon>Bacillota</taxon>
        <taxon>Bacilli</taxon>
        <taxon>Bacillales</taxon>
        <taxon>Staphylococcaceae</taxon>
        <taxon>Staphylococcus</taxon>
    </lineage>
</organism>
<comment type="function">
    <text evidence="1">Catalyzes the attachment of glycine to tRNA(Gly).</text>
</comment>
<comment type="catalytic activity">
    <reaction evidence="1">
        <text>tRNA(Gly) + glycine + ATP = glycyl-tRNA(Gly) + AMP + diphosphate</text>
        <dbReference type="Rhea" id="RHEA:16013"/>
        <dbReference type="Rhea" id="RHEA-COMP:9664"/>
        <dbReference type="Rhea" id="RHEA-COMP:9683"/>
        <dbReference type="ChEBI" id="CHEBI:30616"/>
        <dbReference type="ChEBI" id="CHEBI:33019"/>
        <dbReference type="ChEBI" id="CHEBI:57305"/>
        <dbReference type="ChEBI" id="CHEBI:78442"/>
        <dbReference type="ChEBI" id="CHEBI:78522"/>
        <dbReference type="ChEBI" id="CHEBI:456215"/>
        <dbReference type="EC" id="6.1.1.14"/>
    </reaction>
</comment>
<comment type="subunit">
    <text evidence="1">Homodimer.</text>
</comment>
<comment type="subcellular location">
    <subcellularLocation>
        <location evidence="1">Cytoplasm</location>
    </subcellularLocation>
</comment>
<comment type="similarity">
    <text evidence="1">Belongs to the class-II aminoacyl-tRNA synthetase family.</text>
</comment>
<accession>Q6GGD5</accession>
<dbReference type="EC" id="6.1.1.14" evidence="1"/>
<dbReference type="EMBL" id="BX571856">
    <property type="protein sequence ID" value="CAG40637.1"/>
    <property type="molecule type" value="Genomic_DNA"/>
</dbReference>
<dbReference type="RefSeq" id="WP_001030080.1">
    <property type="nucleotide sequence ID" value="NC_002952.2"/>
</dbReference>
<dbReference type="SMR" id="Q6GGD5"/>
<dbReference type="KEGG" id="sar:SAR1642"/>
<dbReference type="HOGENOM" id="CLU_015515_2_1_9"/>
<dbReference type="Proteomes" id="UP000000596">
    <property type="component" value="Chromosome"/>
</dbReference>
<dbReference type="GO" id="GO:0005737">
    <property type="term" value="C:cytoplasm"/>
    <property type="evidence" value="ECO:0007669"/>
    <property type="project" value="UniProtKB-SubCell"/>
</dbReference>
<dbReference type="GO" id="GO:0005524">
    <property type="term" value="F:ATP binding"/>
    <property type="evidence" value="ECO:0007669"/>
    <property type="project" value="UniProtKB-UniRule"/>
</dbReference>
<dbReference type="GO" id="GO:0140096">
    <property type="term" value="F:catalytic activity, acting on a protein"/>
    <property type="evidence" value="ECO:0007669"/>
    <property type="project" value="UniProtKB-ARBA"/>
</dbReference>
<dbReference type="GO" id="GO:0004820">
    <property type="term" value="F:glycine-tRNA ligase activity"/>
    <property type="evidence" value="ECO:0000250"/>
    <property type="project" value="UniProtKB"/>
</dbReference>
<dbReference type="GO" id="GO:0046983">
    <property type="term" value="F:protein dimerization activity"/>
    <property type="evidence" value="ECO:0000250"/>
    <property type="project" value="UniProtKB"/>
</dbReference>
<dbReference type="GO" id="GO:0016740">
    <property type="term" value="F:transferase activity"/>
    <property type="evidence" value="ECO:0007669"/>
    <property type="project" value="UniProtKB-ARBA"/>
</dbReference>
<dbReference type="GO" id="GO:0006426">
    <property type="term" value="P:glycyl-tRNA aminoacylation"/>
    <property type="evidence" value="ECO:0007669"/>
    <property type="project" value="UniProtKB-UniRule"/>
</dbReference>
<dbReference type="CDD" id="cd00774">
    <property type="entry name" value="GlyRS-like_core"/>
    <property type="match status" value="1"/>
</dbReference>
<dbReference type="CDD" id="cd00858">
    <property type="entry name" value="GlyRS_anticodon"/>
    <property type="match status" value="1"/>
</dbReference>
<dbReference type="FunFam" id="3.40.50.800:FF:000002">
    <property type="entry name" value="Glycine--tRNA ligase"/>
    <property type="match status" value="1"/>
</dbReference>
<dbReference type="Gene3D" id="3.30.40.230">
    <property type="match status" value="1"/>
</dbReference>
<dbReference type="Gene3D" id="3.40.50.800">
    <property type="entry name" value="Anticodon-binding domain"/>
    <property type="match status" value="1"/>
</dbReference>
<dbReference type="Gene3D" id="3.30.930.10">
    <property type="entry name" value="Bira Bifunctional Protein, Domain 2"/>
    <property type="match status" value="1"/>
</dbReference>
<dbReference type="HAMAP" id="MF_00253_B">
    <property type="entry name" value="Gly_tRNA_synth_B"/>
    <property type="match status" value="1"/>
</dbReference>
<dbReference type="InterPro" id="IPR002314">
    <property type="entry name" value="aa-tRNA-synt_IIb"/>
</dbReference>
<dbReference type="InterPro" id="IPR006195">
    <property type="entry name" value="aa-tRNA-synth_II"/>
</dbReference>
<dbReference type="InterPro" id="IPR045864">
    <property type="entry name" value="aa-tRNA-synth_II/BPL/LPL"/>
</dbReference>
<dbReference type="InterPro" id="IPR004154">
    <property type="entry name" value="Anticodon-bd"/>
</dbReference>
<dbReference type="InterPro" id="IPR036621">
    <property type="entry name" value="Anticodon-bd_dom_sf"/>
</dbReference>
<dbReference type="InterPro" id="IPR027031">
    <property type="entry name" value="Gly-tRNA_synthase/POLG2"/>
</dbReference>
<dbReference type="InterPro" id="IPR022961">
    <property type="entry name" value="Gly_tRNA_ligase_bac"/>
</dbReference>
<dbReference type="InterPro" id="IPR033731">
    <property type="entry name" value="GlyRS-like_core"/>
</dbReference>
<dbReference type="InterPro" id="IPR002315">
    <property type="entry name" value="tRNA-synt_gly"/>
</dbReference>
<dbReference type="NCBIfam" id="TIGR00389">
    <property type="entry name" value="glyS_dimeric"/>
    <property type="match status" value="1"/>
</dbReference>
<dbReference type="NCBIfam" id="NF003211">
    <property type="entry name" value="PRK04173.1"/>
    <property type="match status" value="1"/>
</dbReference>
<dbReference type="PANTHER" id="PTHR10745:SF8">
    <property type="entry name" value="DNA POLYMERASE SUBUNIT GAMMA-2, MITOCHONDRIAL"/>
    <property type="match status" value="1"/>
</dbReference>
<dbReference type="PANTHER" id="PTHR10745">
    <property type="entry name" value="GLYCYL-TRNA SYNTHETASE/DNA POLYMERASE SUBUNIT GAMMA-2"/>
    <property type="match status" value="1"/>
</dbReference>
<dbReference type="Pfam" id="PF03129">
    <property type="entry name" value="HGTP_anticodon"/>
    <property type="match status" value="1"/>
</dbReference>
<dbReference type="Pfam" id="PF00587">
    <property type="entry name" value="tRNA-synt_2b"/>
    <property type="match status" value="1"/>
</dbReference>
<dbReference type="PRINTS" id="PR01043">
    <property type="entry name" value="TRNASYNTHGLY"/>
</dbReference>
<dbReference type="SUPFAM" id="SSF52954">
    <property type="entry name" value="Class II aaRS ABD-related"/>
    <property type="match status" value="1"/>
</dbReference>
<dbReference type="SUPFAM" id="SSF55681">
    <property type="entry name" value="Class II aaRS and biotin synthetases"/>
    <property type="match status" value="1"/>
</dbReference>
<dbReference type="PROSITE" id="PS50862">
    <property type="entry name" value="AA_TRNA_LIGASE_II"/>
    <property type="match status" value="1"/>
</dbReference>
<reference key="1">
    <citation type="journal article" date="2004" name="Proc. Natl. Acad. Sci. U.S.A.">
        <title>Complete genomes of two clinical Staphylococcus aureus strains: evidence for the rapid evolution of virulence and drug resistance.</title>
        <authorList>
            <person name="Holden M.T.G."/>
            <person name="Feil E.J."/>
            <person name="Lindsay J.A."/>
            <person name="Peacock S.J."/>
            <person name="Day N.P.J."/>
            <person name="Enright M.C."/>
            <person name="Foster T.J."/>
            <person name="Moore C.E."/>
            <person name="Hurst L."/>
            <person name="Atkin R."/>
            <person name="Barron A."/>
            <person name="Bason N."/>
            <person name="Bentley S.D."/>
            <person name="Chillingworth C."/>
            <person name="Chillingworth T."/>
            <person name="Churcher C."/>
            <person name="Clark L."/>
            <person name="Corton C."/>
            <person name="Cronin A."/>
            <person name="Doggett J."/>
            <person name="Dowd L."/>
            <person name="Feltwell T."/>
            <person name="Hance Z."/>
            <person name="Harris B."/>
            <person name="Hauser H."/>
            <person name="Holroyd S."/>
            <person name="Jagels K."/>
            <person name="James K.D."/>
            <person name="Lennard N."/>
            <person name="Line A."/>
            <person name="Mayes R."/>
            <person name="Moule S."/>
            <person name="Mungall K."/>
            <person name="Ormond D."/>
            <person name="Quail M.A."/>
            <person name="Rabbinowitsch E."/>
            <person name="Rutherford K.M."/>
            <person name="Sanders M."/>
            <person name="Sharp S."/>
            <person name="Simmonds M."/>
            <person name="Stevens K."/>
            <person name="Whitehead S."/>
            <person name="Barrell B.G."/>
            <person name="Spratt B.G."/>
            <person name="Parkhill J."/>
        </authorList>
    </citation>
    <scope>NUCLEOTIDE SEQUENCE [LARGE SCALE GENOMIC DNA]</scope>
    <source>
        <strain>MRSA252</strain>
    </source>
</reference>
<feature type="chain" id="PRO_0000072975" description="Glycine--tRNA ligase">
    <location>
        <begin position="1"/>
        <end position="463"/>
    </location>
</feature>
<feature type="binding site" evidence="1">
    <location>
        <position position="98"/>
    </location>
    <ligand>
        <name>substrate</name>
    </ligand>
</feature>
<feature type="binding site" evidence="1">
    <location>
        <position position="174"/>
    </location>
    <ligand>
        <name>substrate</name>
    </ligand>
</feature>
<feature type="binding site" evidence="1">
    <location>
        <begin position="206"/>
        <end position="208"/>
    </location>
    <ligand>
        <name>ATP</name>
        <dbReference type="ChEBI" id="CHEBI:30616"/>
    </ligand>
</feature>
<feature type="binding site" evidence="1">
    <location>
        <begin position="216"/>
        <end position="221"/>
    </location>
    <ligand>
        <name>ATP</name>
        <dbReference type="ChEBI" id="CHEBI:30616"/>
    </ligand>
</feature>
<feature type="binding site" evidence="1">
    <location>
        <begin position="221"/>
        <end position="225"/>
    </location>
    <ligand>
        <name>substrate</name>
    </ligand>
</feature>
<feature type="binding site" evidence="1">
    <location>
        <begin position="290"/>
        <end position="291"/>
    </location>
    <ligand>
        <name>ATP</name>
        <dbReference type="ChEBI" id="CHEBI:30616"/>
    </ligand>
</feature>
<feature type="binding site" evidence="1">
    <location>
        <begin position="330"/>
        <end position="334"/>
    </location>
    <ligand>
        <name>substrate</name>
    </ligand>
</feature>
<feature type="binding site" evidence="1">
    <location>
        <begin position="334"/>
        <end position="337"/>
    </location>
    <ligand>
        <name>ATP</name>
        <dbReference type="ChEBI" id="CHEBI:30616"/>
    </ligand>
</feature>
<gene>
    <name evidence="1" type="primary">glyQS</name>
    <name type="ordered locus">SAR1642</name>
</gene>
<keyword id="KW-0030">Aminoacyl-tRNA synthetase</keyword>
<keyword id="KW-0067">ATP-binding</keyword>
<keyword id="KW-0963">Cytoplasm</keyword>
<keyword id="KW-0436">Ligase</keyword>
<keyword id="KW-0547">Nucleotide-binding</keyword>
<keyword id="KW-0648">Protein biosynthesis</keyword>
<protein>
    <recommendedName>
        <fullName evidence="1">Glycine--tRNA ligase</fullName>
        <ecNumber evidence="1">6.1.1.14</ecNumber>
    </recommendedName>
    <alternativeName>
        <fullName evidence="1">Glycyl-tRNA synthetase</fullName>
        <shortName evidence="1">GlyRS</shortName>
    </alternativeName>
</protein>
<proteinExistence type="inferred from homology"/>
<name>SYG_STAAR</name>